<accession>P15835</accession>
<proteinExistence type="inferred from homology"/>
<organism>
    <name type="scientific">Human immunodeficiency virus type 2 subtype B (isolate D205)</name>
    <name type="common">HIV-2</name>
    <dbReference type="NCBI Taxonomy" id="11716"/>
    <lineage>
        <taxon>Viruses</taxon>
        <taxon>Riboviria</taxon>
        <taxon>Pararnavirae</taxon>
        <taxon>Artverviricota</taxon>
        <taxon>Revtraviricetes</taxon>
        <taxon>Ortervirales</taxon>
        <taxon>Retroviridae</taxon>
        <taxon>Orthoretrovirinae</taxon>
        <taxon>Lentivirus</taxon>
        <taxon>Human immunodeficiency virus 2</taxon>
    </lineage>
</organism>
<protein>
    <recommendedName>
        <fullName>Protein Tat</fullName>
    </recommendedName>
    <alternativeName>
        <fullName>Transactivating regulatory protein</fullName>
    </alternativeName>
</protein>
<name>TAT_HV2D2</name>
<keyword id="KW-0010">Activator</keyword>
<keyword id="KW-0014">AIDS</keyword>
<keyword id="KW-0025">Alternative splicing</keyword>
<keyword id="KW-1048">Host nucleus</keyword>
<keyword id="KW-0945">Host-virus interaction</keyword>
<keyword id="KW-0597">Phosphoprotein</keyword>
<keyword id="KW-0694">RNA-binding</keyword>
<keyword id="KW-0804">Transcription</keyword>
<keyword id="KW-0805">Transcription regulation</keyword>
<gene>
    <name type="primary">tat</name>
</gene>
<evidence type="ECO:0000250" key="1"/>
<evidence type="ECO:0000250" key="2">
    <source>
        <dbReference type="UniProtKB" id="P04608"/>
    </source>
</evidence>
<evidence type="ECO:0000256" key="3">
    <source>
        <dbReference type="SAM" id="MobiDB-lite"/>
    </source>
</evidence>
<evidence type="ECO:0000305" key="4"/>
<dbReference type="EMBL" id="X61240">
    <property type="status" value="NOT_ANNOTATED_CDS"/>
    <property type="molecule type" value="Genomic_DNA"/>
</dbReference>
<dbReference type="PIR" id="S08440">
    <property type="entry name" value="S08440"/>
</dbReference>
<dbReference type="Proteomes" id="UP000247120">
    <property type="component" value="Segment"/>
</dbReference>
<dbReference type="GO" id="GO:0044196">
    <property type="term" value="C:host cell nucleolus"/>
    <property type="evidence" value="ECO:0007669"/>
    <property type="project" value="UniProtKB-SubCell"/>
</dbReference>
<dbReference type="GO" id="GO:0003723">
    <property type="term" value="F:RNA binding"/>
    <property type="evidence" value="ECO:0007669"/>
    <property type="project" value="UniProtKB-KW"/>
</dbReference>
<dbReference type="GO" id="GO:0001070">
    <property type="term" value="F:RNA-binding transcription regulator activity"/>
    <property type="evidence" value="ECO:0007669"/>
    <property type="project" value="InterPro"/>
</dbReference>
<dbReference type="GO" id="GO:0050434">
    <property type="term" value="P:positive regulation of viral transcription"/>
    <property type="evidence" value="ECO:0007669"/>
    <property type="project" value="InterPro"/>
</dbReference>
<dbReference type="Gene3D" id="4.10.20.10">
    <property type="entry name" value="Tat domain"/>
    <property type="match status" value="1"/>
</dbReference>
<dbReference type="InterPro" id="IPR001831">
    <property type="entry name" value="IV_Tat"/>
</dbReference>
<dbReference type="InterPro" id="IPR036963">
    <property type="entry name" value="Tat_dom_sf"/>
</dbReference>
<dbReference type="Pfam" id="PF00539">
    <property type="entry name" value="Tat"/>
    <property type="match status" value="1"/>
</dbReference>
<dbReference type="PRINTS" id="PR00055">
    <property type="entry name" value="HIVTATDOMAIN"/>
</dbReference>
<sequence>MEIPLQEQESSLKSSNEPSSSTSEPVVNTQGLDNQGEEILSQLYRPLKACDNTCYCKKCCYHCQLCFLKKGLGICYDRSRRRSAKRAKTTAPSAPDK</sequence>
<comment type="function">
    <text evidence="2">Transcriptional activator that increases RNA Pol II processivity, thereby increasing the level of full-length viral transcripts. Recognizes a hairpin structure at the 5'-LTR of the nascent viral mRNAs referred to as the transactivation responsive RNA element (TAR) and recruits the cyclin T1-CDK9 complex (P-TEFb complex) that will in turn hyperphosphorylate the RNA polymerase II to allow efficient elongation. The CDK9 component of P-TEFb and other Tat-activated kinases hyperphosphorylate the C-terminus of RNA Pol II that becomes stabilized and much more processive.</text>
</comment>
<comment type="function">
    <text evidence="1">Extracellular circulating Tat can be endocytosed by surrounding uninfected cells via the binding to several surface receptors. Endosomal low pH allows Tat to cross the endosome membrane to enter the cytosol and eventually further translocate into the nucleus, thereby inducing severe cell dysfunctions ranging from cell activation to cell death. Through (By similarity).</text>
</comment>
<comment type="subunit">
    <text evidence="1">Interacts with host CCNT1. Associates with the P-TEFb complex composed at least of Tat, P-TEFb (CDK9 and CCNT1), TAR RNA, RNA Pol II. Interacts with CCNT2; the resulting complex is unable to bind to TAR RNA (By similarity).</text>
</comment>
<comment type="subcellular location">
    <subcellularLocation>
        <location evidence="1">Host nucleus</location>
        <location evidence="1">Host nucleolus</location>
    </subcellularLocation>
</comment>
<comment type="alternative products">
    <event type="alternative splicing"/>
    <isoform>
        <id>P15835-1</id>
        <name>Short</name>
        <sequence type="displayed"/>
    </isoform>
    <isoform>
        <id>P15835-2</id>
        <name>Long</name>
        <sequence type="not described"/>
    </isoform>
</comment>
<comment type="domain">
    <text evidence="1">The Arg-rich RNA-binding region binds the TAR RNA. This region also mediates the nuclear localization (By similarity).</text>
</comment>
<comment type="PTM">
    <text evidence="1">The phosphorylation by CDK9 does not seem to be important for transactivation function.</text>
</comment>
<comment type="miscellaneous">
    <molecule>Isoform Long</molecule>
    <text evidence="4">Expressed in the late stage of the infection cycle, when unspliced viral RNAs are exported to the cytoplasm by the viral Rev protein.</text>
</comment>
<comment type="similarity">
    <text evidence="4">Belongs to the lentiviruses Tat family.</text>
</comment>
<feature type="chain" id="PRO_0000085369" description="Protein Tat">
    <location>
        <begin position="1"/>
        <end position="97" status="greater than"/>
    </location>
</feature>
<feature type="region of interest" description="Disordered" evidence="3">
    <location>
        <begin position="1"/>
        <end position="32"/>
    </location>
</feature>
<feature type="region of interest" description="Cysteine-rich" evidence="1">
    <location>
        <begin position="50"/>
        <end position="66"/>
    </location>
</feature>
<feature type="region of interest" description="Core" evidence="1">
    <location>
        <begin position="67"/>
        <end position="77"/>
    </location>
</feature>
<feature type="short sequence motif" description="Nuclear localization signal, and RNA-binding (TAR)" evidence="1">
    <location>
        <begin position="78"/>
        <end position="88"/>
    </location>
</feature>
<feature type="compositionally biased region" description="Low complexity" evidence="3">
    <location>
        <begin position="14"/>
        <end position="29"/>
    </location>
</feature>
<feature type="non-terminal residue">
    <location>
        <position position="97"/>
    </location>
</feature>
<organismHost>
    <name type="scientific">Homo sapiens</name>
    <name type="common">Human</name>
    <dbReference type="NCBI Taxonomy" id="9606"/>
</organismHost>
<reference key="1">
    <citation type="journal article" date="1989" name="Nature">
        <title>A highly divergent HIV-2-related isolate.</title>
        <authorList>
            <person name="Dietrich U."/>
            <person name="Adamski M."/>
            <person name="Kreutz R."/>
            <person name="Seipp A."/>
            <person name="Kuehnel H."/>
            <person name="Ruebsamen-Waigmann H."/>
        </authorList>
    </citation>
    <scope>NUCLEOTIDE SEQUENCE [GENOMIC DNA]</scope>
</reference>
<reference key="2">
    <citation type="journal article" date="2005" name="Microbes Infect.">
        <title>Decoding Tat: the biology of HIV Tat posttranslational modifications.</title>
        <authorList>
            <person name="Hetzer C."/>
            <person name="Dormeyer W."/>
            <person name="Schnolzer M."/>
            <person name="Ott M."/>
        </authorList>
    </citation>
    <scope>REVIEW</scope>
    <scope>ALTERNATIVE SPLICING</scope>
</reference>